<accession>A7GJ49</accession>
<gene>
    <name evidence="1" type="primary">rpmJ</name>
    <name type="ordered locus">CLI_3638</name>
</gene>
<dbReference type="EMBL" id="CP000728">
    <property type="protein sequence ID" value="ABS39937.1"/>
    <property type="molecule type" value="Genomic_DNA"/>
</dbReference>
<dbReference type="RefSeq" id="WP_003156543.1">
    <property type="nucleotide sequence ID" value="NC_009699.1"/>
</dbReference>
<dbReference type="SMR" id="A7GJ49"/>
<dbReference type="GeneID" id="97412846"/>
<dbReference type="KEGG" id="cbf:CLI_3638"/>
<dbReference type="HOGENOM" id="CLU_135723_6_2_9"/>
<dbReference type="Proteomes" id="UP000002410">
    <property type="component" value="Chromosome"/>
</dbReference>
<dbReference type="GO" id="GO:0005737">
    <property type="term" value="C:cytoplasm"/>
    <property type="evidence" value="ECO:0007669"/>
    <property type="project" value="UniProtKB-ARBA"/>
</dbReference>
<dbReference type="GO" id="GO:1990904">
    <property type="term" value="C:ribonucleoprotein complex"/>
    <property type="evidence" value="ECO:0007669"/>
    <property type="project" value="UniProtKB-KW"/>
</dbReference>
<dbReference type="GO" id="GO:0005840">
    <property type="term" value="C:ribosome"/>
    <property type="evidence" value="ECO:0007669"/>
    <property type="project" value="UniProtKB-KW"/>
</dbReference>
<dbReference type="GO" id="GO:0003735">
    <property type="term" value="F:structural constituent of ribosome"/>
    <property type="evidence" value="ECO:0007669"/>
    <property type="project" value="InterPro"/>
</dbReference>
<dbReference type="GO" id="GO:0006412">
    <property type="term" value="P:translation"/>
    <property type="evidence" value="ECO:0007669"/>
    <property type="project" value="UniProtKB-UniRule"/>
</dbReference>
<dbReference type="HAMAP" id="MF_00251">
    <property type="entry name" value="Ribosomal_bL36"/>
    <property type="match status" value="1"/>
</dbReference>
<dbReference type="InterPro" id="IPR000473">
    <property type="entry name" value="Ribosomal_bL36"/>
</dbReference>
<dbReference type="InterPro" id="IPR035977">
    <property type="entry name" value="Ribosomal_bL36_sp"/>
</dbReference>
<dbReference type="NCBIfam" id="TIGR01022">
    <property type="entry name" value="rpmJ_bact"/>
    <property type="match status" value="1"/>
</dbReference>
<dbReference type="PANTHER" id="PTHR42888">
    <property type="entry name" value="50S RIBOSOMAL PROTEIN L36, CHLOROPLASTIC"/>
    <property type="match status" value="1"/>
</dbReference>
<dbReference type="PANTHER" id="PTHR42888:SF1">
    <property type="entry name" value="LARGE RIBOSOMAL SUBUNIT PROTEIN BL36C"/>
    <property type="match status" value="1"/>
</dbReference>
<dbReference type="Pfam" id="PF00444">
    <property type="entry name" value="Ribosomal_L36"/>
    <property type="match status" value="1"/>
</dbReference>
<dbReference type="SUPFAM" id="SSF57840">
    <property type="entry name" value="Ribosomal protein L36"/>
    <property type="match status" value="1"/>
</dbReference>
<dbReference type="PROSITE" id="PS00828">
    <property type="entry name" value="RIBOSOMAL_L36"/>
    <property type="match status" value="1"/>
</dbReference>
<evidence type="ECO:0000255" key="1">
    <source>
        <dbReference type="HAMAP-Rule" id="MF_00251"/>
    </source>
</evidence>
<evidence type="ECO:0000305" key="2"/>
<proteinExistence type="inferred from homology"/>
<keyword id="KW-0687">Ribonucleoprotein</keyword>
<keyword id="KW-0689">Ribosomal protein</keyword>
<sequence length="37" mass="4305">MKVRPSVKPICEKCKVIRRKGKVMVICENPKHKQKQG</sequence>
<organism>
    <name type="scientific">Clostridium botulinum (strain Langeland / NCTC 10281 / Type F)</name>
    <dbReference type="NCBI Taxonomy" id="441772"/>
    <lineage>
        <taxon>Bacteria</taxon>
        <taxon>Bacillati</taxon>
        <taxon>Bacillota</taxon>
        <taxon>Clostridia</taxon>
        <taxon>Eubacteriales</taxon>
        <taxon>Clostridiaceae</taxon>
        <taxon>Clostridium</taxon>
    </lineage>
</organism>
<protein>
    <recommendedName>
        <fullName evidence="1">Large ribosomal subunit protein bL36</fullName>
    </recommendedName>
    <alternativeName>
        <fullName evidence="2">50S ribosomal protein L36</fullName>
    </alternativeName>
</protein>
<comment type="similarity">
    <text evidence="1">Belongs to the bacterial ribosomal protein bL36 family.</text>
</comment>
<feature type="chain" id="PRO_1000003402" description="Large ribosomal subunit protein bL36">
    <location>
        <begin position="1"/>
        <end position="37"/>
    </location>
</feature>
<name>RL36_CLOBL</name>
<reference key="1">
    <citation type="submission" date="2007-06" db="EMBL/GenBank/DDBJ databases">
        <authorList>
            <person name="Brinkac L.M."/>
            <person name="Daugherty S."/>
            <person name="Dodson R.J."/>
            <person name="Madupu R."/>
            <person name="Brown J.L."/>
            <person name="Bruce D."/>
            <person name="Detter C."/>
            <person name="Munk C."/>
            <person name="Smith L.A."/>
            <person name="Smith T.J."/>
            <person name="White O."/>
            <person name="Brettin T.S."/>
        </authorList>
    </citation>
    <scope>NUCLEOTIDE SEQUENCE [LARGE SCALE GENOMIC DNA]</scope>
    <source>
        <strain>Langeland / NCTC 10281 / Type F</strain>
    </source>
</reference>